<comment type="function">
    <text evidence="2">One of the essential components for the initiation of protein synthesis. Protects formylmethionyl-tRNA from spontaneous hydrolysis and promotes its binding to the 30S ribosomal subunits. Also involved in the hydrolysis of GTP during the formation of the 70S ribosomal complex.</text>
</comment>
<comment type="subcellular location">
    <subcellularLocation>
        <location evidence="2">Cytoplasm</location>
    </subcellularLocation>
</comment>
<comment type="similarity">
    <text evidence="2">Belongs to the TRAFAC class translation factor GTPase superfamily. Classic translation factor GTPase family. IF-2 subfamily.</text>
</comment>
<keyword id="KW-0963">Cytoplasm</keyword>
<keyword id="KW-0342">GTP-binding</keyword>
<keyword id="KW-0396">Initiation factor</keyword>
<keyword id="KW-0547">Nucleotide-binding</keyword>
<keyword id="KW-0648">Protein biosynthesis</keyword>
<gene>
    <name evidence="2" type="primary">infB</name>
    <name type="ordered locus">NMA1897</name>
</gene>
<protein>
    <recommendedName>
        <fullName evidence="2">Translation initiation factor IF-2</fullName>
    </recommendedName>
</protein>
<proteinExistence type="inferred from homology"/>
<reference key="1">
    <citation type="journal article" date="2000" name="Nature">
        <title>Complete DNA sequence of a serogroup A strain of Neisseria meningitidis Z2491.</title>
        <authorList>
            <person name="Parkhill J."/>
            <person name="Achtman M."/>
            <person name="James K.D."/>
            <person name="Bentley S.D."/>
            <person name="Churcher C.M."/>
            <person name="Klee S.R."/>
            <person name="Morelli G."/>
            <person name="Basham D."/>
            <person name="Brown D."/>
            <person name="Chillingworth T."/>
            <person name="Davies R.M."/>
            <person name="Davis P."/>
            <person name="Devlin K."/>
            <person name="Feltwell T."/>
            <person name="Hamlin N."/>
            <person name="Holroyd S."/>
            <person name="Jagels K."/>
            <person name="Leather S."/>
            <person name="Moule S."/>
            <person name="Mungall K.L."/>
            <person name="Quail M.A."/>
            <person name="Rajandream M.A."/>
            <person name="Rutherford K.M."/>
            <person name="Simmonds M."/>
            <person name="Skelton J."/>
            <person name="Whitehead S."/>
            <person name="Spratt B.G."/>
            <person name="Barrell B.G."/>
        </authorList>
    </citation>
    <scope>NUCLEOTIDE SEQUENCE [LARGE SCALE GENOMIC DNA]</scope>
    <source>
        <strain>DSM 15465 / Z2491</strain>
    </source>
</reference>
<sequence>MSNTTVEQFAAELKRPVEDLLKQLKEAGVSKNSGSDSLTLDDKQLLNAYLTKKNGSNGGTISIRRTKTEVSTVDGVKVETRKRGRTVNIPSAEELAAQVKAAQTQAAPVRPEQTAEDAAKARAEAATRAEARAKAEAEAAKLKAAKAGNKAKPAAQKPTEAKAETAPVAAETKPAEESKAEKAQADKMPSKKPAEPKEKAAKPKHERNGKGKDAKKPAKPAAPAVPQPVVSAEEQAQRDEEARRAAALRAHQEALLKEKQERQARREAMKQQAEQQAKAAQEAKTGRQRPAKPAEKPQAAAPAVENKPVNPAKAKKENRRNRDDEGQGRNAKGKGGKGGRDRNNARNGDDERVRGSKKGKKLKLEPNQHAFQAPTEPVVHEVLVPETITVADLAHKMAVKGVEVVKALMKMGMMVTINQSIDQDTALIVVEELGHIGKPAAADDPEAFLDEGAEAVEAEALPRPPVVTVMGHVDHGKTSLLDYIRRAKVVQGEAGGITQHIGAYHVKTPRGVITFLDTPGHEAFTAMRARGAKATDIVILVVAADDGVMPQTIEAIAHAKAAGVPMVVAVNKIDKEAANPERIRQELTAHEVVPDEWGGDVQFIDVSAKKGLNIDALLEAVLLEAEVLELTAPVDAPAKGIIVEARLDKGRGAVATLLVQSGTLKKGDMLLAGTAFGKIRAMVDENGKAINEAGPSIPVEILGLSDVPNAGEDAMVLADEKKAREIALFRQGKYRDVRLAKQQAAKLENMFNNMGETQAQSLSVIIKADVQGSYEALAGSLKKLSTDEVKVDVLHSGVGGITESDVNLAIASGAFIIGFNVRADASSRKLAENENVEIRYYNIIYDAIDDVKAAMSGMLSPEEKEQVTGTVEIRQVISVSKVGNIAGCMVTDGVVKRDSHARLIRNNVVIHTGELSSLKRYKDDVKEVRMGFECGLMIKGYNEIMEGDQLECFDIVEVARTL</sequence>
<organism>
    <name type="scientific">Neisseria meningitidis serogroup A / serotype 4A (strain DSM 15465 / Z2491)</name>
    <dbReference type="NCBI Taxonomy" id="122587"/>
    <lineage>
        <taxon>Bacteria</taxon>
        <taxon>Pseudomonadati</taxon>
        <taxon>Pseudomonadota</taxon>
        <taxon>Betaproteobacteria</taxon>
        <taxon>Neisseriales</taxon>
        <taxon>Neisseriaceae</taxon>
        <taxon>Neisseria</taxon>
    </lineage>
</organism>
<feature type="chain" id="PRO_0000137226" description="Translation initiation factor IF-2">
    <location>
        <begin position="1"/>
        <end position="962"/>
    </location>
</feature>
<feature type="domain" description="tr-type G">
    <location>
        <begin position="462"/>
        <end position="631"/>
    </location>
</feature>
<feature type="region of interest" description="Disordered" evidence="3">
    <location>
        <begin position="101"/>
        <end position="366"/>
    </location>
</feature>
<feature type="region of interest" description="G1" evidence="1">
    <location>
        <begin position="471"/>
        <end position="478"/>
    </location>
</feature>
<feature type="region of interest" description="G2" evidence="1">
    <location>
        <begin position="496"/>
        <end position="500"/>
    </location>
</feature>
<feature type="region of interest" description="G3" evidence="1">
    <location>
        <begin position="517"/>
        <end position="520"/>
    </location>
</feature>
<feature type="region of interest" description="G4" evidence="1">
    <location>
        <begin position="571"/>
        <end position="574"/>
    </location>
</feature>
<feature type="region of interest" description="G5" evidence="1">
    <location>
        <begin position="607"/>
        <end position="609"/>
    </location>
</feature>
<feature type="compositionally biased region" description="Basic and acidic residues" evidence="3">
    <location>
        <begin position="117"/>
        <end position="141"/>
    </location>
</feature>
<feature type="compositionally biased region" description="Low complexity" evidence="3">
    <location>
        <begin position="145"/>
        <end position="157"/>
    </location>
</feature>
<feature type="compositionally biased region" description="Basic and acidic residues" evidence="3">
    <location>
        <begin position="173"/>
        <end position="216"/>
    </location>
</feature>
<feature type="compositionally biased region" description="Low complexity" evidence="3">
    <location>
        <begin position="219"/>
        <end position="234"/>
    </location>
</feature>
<feature type="compositionally biased region" description="Basic and acidic residues" evidence="3">
    <location>
        <begin position="235"/>
        <end position="269"/>
    </location>
</feature>
<feature type="compositionally biased region" description="Low complexity" evidence="3">
    <location>
        <begin position="270"/>
        <end position="283"/>
    </location>
</feature>
<feature type="compositionally biased region" description="Basic and acidic residues" evidence="3">
    <location>
        <begin position="338"/>
        <end position="354"/>
    </location>
</feature>
<feature type="binding site" evidence="2">
    <location>
        <begin position="471"/>
        <end position="478"/>
    </location>
    <ligand>
        <name>GTP</name>
        <dbReference type="ChEBI" id="CHEBI:37565"/>
    </ligand>
</feature>
<feature type="binding site" evidence="2">
    <location>
        <begin position="517"/>
        <end position="521"/>
    </location>
    <ligand>
        <name>GTP</name>
        <dbReference type="ChEBI" id="CHEBI:37565"/>
    </ligand>
</feature>
<feature type="binding site" evidence="2">
    <location>
        <begin position="571"/>
        <end position="574"/>
    </location>
    <ligand>
        <name>GTP</name>
        <dbReference type="ChEBI" id="CHEBI:37565"/>
    </ligand>
</feature>
<accession>Q9JTB5</accession>
<accession>A1ITA1</accession>
<dbReference type="EMBL" id="AL157959">
    <property type="protein sequence ID" value="CAM09014.1"/>
    <property type="molecule type" value="Genomic_DNA"/>
</dbReference>
<dbReference type="PIR" id="A81817">
    <property type="entry name" value="A81817"/>
</dbReference>
<dbReference type="RefSeq" id="WP_010981249.1">
    <property type="nucleotide sequence ID" value="NC_003116.1"/>
</dbReference>
<dbReference type="SMR" id="Q9JTB5"/>
<dbReference type="EnsemblBacteria" id="CAM09014">
    <property type="protein sequence ID" value="CAM09014"/>
    <property type="gene ID" value="NMA1897"/>
</dbReference>
<dbReference type="KEGG" id="nma:NMA1897"/>
<dbReference type="HOGENOM" id="CLU_006301_6_0_4"/>
<dbReference type="Proteomes" id="UP000000626">
    <property type="component" value="Chromosome"/>
</dbReference>
<dbReference type="GO" id="GO:0005829">
    <property type="term" value="C:cytosol"/>
    <property type="evidence" value="ECO:0007669"/>
    <property type="project" value="TreeGrafter"/>
</dbReference>
<dbReference type="GO" id="GO:0005525">
    <property type="term" value="F:GTP binding"/>
    <property type="evidence" value="ECO:0007669"/>
    <property type="project" value="UniProtKB-KW"/>
</dbReference>
<dbReference type="GO" id="GO:0003924">
    <property type="term" value="F:GTPase activity"/>
    <property type="evidence" value="ECO:0007669"/>
    <property type="project" value="UniProtKB-UniRule"/>
</dbReference>
<dbReference type="GO" id="GO:0003743">
    <property type="term" value="F:translation initiation factor activity"/>
    <property type="evidence" value="ECO:0007669"/>
    <property type="project" value="UniProtKB-UniRule"/>
</dbReference>
<dbReference type="CDD" id="cd01887">
    <property type="entry name" value="IF2_eIF5B"/>
    <property type="match status" value="1"/>
</dbReference>
<dbReference type="CDD" id="cd03702">
    <property type="entry name" value="IF2_mtIF2_II"/>
    <property type="match status" value="1"/>
</dbReference>
<dbReference type="CDD" id="cd03692">
    <property type="entry name" value="mtIF2_IVc"/>
    <property type="match status" value="1"/>
</dbReference>
<dbReference type="FunFam" id="2.40.30.10:FF:000007">
    <property type="entry name" value="Translation initiation factor IF-2"/>
    <property type="match status" value="1"/>
</dbReference>
<dbReference type="FunFam" id="2.40.30.10:FF:000008">
    <property type="entry name" value="Translation initiation factor IF-2"/>
    <property type="match status" value="1"/>
</dbReference>
<dbReference type="FunFam" id="3.40.50.10050:FF:000001">
    <property type="entry name" value="Translation initiation factor IF-2"/>
    <property type="match status" value="1"/>
</dbReference>
<dbReference type="FunFam" id="3.40.50.300:FF:000019">
    <property type="entry name" value="Translation initiation factor IF-2"/>
    <property type="match status" value="1"/>
</dbReference>
<dbReference type="Gene3D" id="3.40.50.300">
    <property type="entry name" value="P-loop containing nucleotide triphosphate hydrolases"/>
    <property type="match status" value="1"/>
</dbReference>
<dbReference type="Gene3D" id="3.30.56.50">
    <property type="entry name" value="Putative DNA-binding domain, N-terminal subdomain of bacterial translation initiation factor IF2"/>
    <property type="match status" value="1"/>
</dbReference>
<dbReference type="Gene3D" id="2.40.30.10">
    <property type="entry name" value="Translation factors"/>
    <property type="match status" value="2"/>
</dbReference>
<dbReference type="Gene3D" id="3.40.50.10050">
    <property type="entry name" value="Translation initiation factor IF- 2, domain 3"/>
    <property type="match status" value="1"/>
</dbReference>
<dbReference type="HAMAP" id="MF_00100_B">
    <property type="entry name" value="IF_2_B"/>
    <property type="match status" value="1"/>
</dbReference>
<dbReference type="InterPro" id="IPR009061">
    <property type="entry name" value="DNA-bd_dom_put_sf"/>
</dbReference>
<dbReference type="InterPro" id="IPR053905">
    <property type="entry name" value="EF-G-like_DII"/>
</dbReference>
<dbReference type="InterPro" id="IPR044145">
    <property type="entry name" value="IF2_II"/>
</dbReference>
<dbReference type="InterPro" id="IPR006847">
    <property type="entry name" value="IF2_N"/>
</dbReference>
<dbReference type="InterPro" id="IPR027417">
    <property type="entry name" value="P-loop_NTPase"/>
</dbReference>
<dbReference type="InterPro" id="IPR005225">
    <property type="entry name" value="Small_GTP-bd"/>
</dbReference>
<dbReference type="InterPro" id="IPR000795">
    <property type="entry name" value="T_Tr_GTP-bd_dom"/>
</dbReference>
<dbReference type="InterPro" id="IPR000178">
    <property type="entry name" value="TF_IF2_bacterial-like"/>
</dbReference>
<dbReference type="InterPro" id="IPR015760">
    <property type="entry name" value="TIF_IF2"/>
</dbReference>
<dbReference type="InterPro" id="IPR023115">
    <property type="entry name" value="TIF_IF2_dom3"/>
</dbReference>
<dbReference type="InterPro" id="IPR036925">
    <property type="entry name" value="TIF_IF2_dom3_sf"/>
</dbReference>
<dbReference type="InterPro" id="IPR009000">
    <property type="entry name" value="Transl_B-barrel_sf"/>
</dbReference>
<dbReference type="NCBIfam" id="TIGR00487">
    <property type="entry name" value="IF-2"/>
    <property type="match status" value="1"/>
</dbReference>
<dbReference type="NCBIfam" id="TIGR00231">
    <property type="entry name" value="small_GTP"/>
    <property type="match status" value="1"/>
</dbReference>
<dbReference type="PANTHER" id="PTHR43381:SF5">
    <property type="entry name" value="TR-TYPE G DOMAIN-CONTAINING PROTEIN"/>
    <property type="match status" value="1"/>
</dbReference>
<dbReference type="PANTHER" id="PTHR43381">
    <property type="entry name" value="TRANSLATION INITIATION FACTOR IF-2-RELATED"/>
    <property type="match status" value="1"/>
</dbReference>
<dbReference type="Pfam" id="PF22042">
    <property type="entry name" value="EF-G_D2"/>
    <property type="match status" value="1"/>
</dbReference>
<dbReference type="Pfam" id="PF00009">
    <property type="entry name" value="GTP_EFTU"/>
    <property type="match status" value="1"/>
</dbReference>
<dbReference type="Pfam" id="PF11987">
    <property type="entry name" value="IF-2"/>
    <property type="match status" value="1"/>
</dbReference>
<dbReference type="Pfam" id="PF04760">
    <property type="entry name" value="IF2_N"/>
    <property type="match status" value="2"/>
</dbReference>
<dbReference type="SUPFAM" id="SSF52156">
    <property type="entry name" value="Initiation factor IF2/eIF5b, domain 3"/>
    <property type="match status" value="1"/>
</dbReference>
<dbReference type="SUPFAM" id="SSF52540">
    <property type="entry name" value="P-loop containing nucleoside triphosphate hydrolases"/>
    <property type="match status" value="1"/>
</dbReference>
<dbReference type="SUPFAM" id="SSF46955">
    <property type="entry name" value="Putative DNA-binding domain"/>
    <property type="match status" value="1"/>
</dbReference>
<dbReference type="SUPFAM" id="SSF50447">
    <property type="entry name" value="Translation proteins"/>
    <property type="match status" value="2"/>
</dbReference>
<dbReference type="PROSITE" id="PS51722">
    <property type="entry name" value="G_TR_2"/>
    <property type="match status" value="1"/>
</dbReference>
<dbReference type="PROSITE" id="PS01176">
    <property type="entry name" value="IF2"/>
    <property type="match status" value="1"/>
</dbReference>
<evidence type="ECO:0000250" key="1"/>
<evidence type="ECO:0000255" key="2">
    <source>
        <dbReference type="HAMAP-Rule" id="MF_00100"/>
    </source>
</evidence>
<evidence type="ECO:0000256" key="3">
    <source>
        <dbReference type="SAM" id="MobiDB-lite"/>
    </source>
</evidence>
<name>IF2_NEIMA</name>